<comment type="similarity">
    <text evidence="1">Belongs to the bacterial ribosomal protein bL34 family.</text>
</comment>
<feature type="chain" id="PRO_0000187412" description="Large ribosomal subunit protein bL34">
    <location>
        <begin position="1"/>
        <end position="44"/>
    </location>
</feature>
<feature type="sequence conflict" description="In Ref. 1." evidence="1" ref="1">
    <original>GRVRLSA</original>
    <variation>VELDYLLNNLWKTK</variation>
    <location>
        <begin position="38"/>
        <end position="44"/>
    </location>
</feature>
<evidence type="ECO:0000305" key="1"/>
<reference key="1">
    <citation type="journal article" date="1995" name="Mol. Microbiol.">
        <title>Exploring the Mycoplasma capricolum genome: a minimal cell reveals its physiology.</title>
        <authorList>
            <person name="Bork P."/>
            <person name="Ouzounis C."/>
            <person name="Casari G."/>
            <person name="Schneider R."/>
            <person name="Sander C."/>
            <person name="Dolan M."/>
            <person name="Gilbert W."/>
            <person name="Gillevet P.M."/>
        </authorList>
    </citation>
    <scope>NUCLEOTIDE SEQUENCE [GENOMIC DNA]</scope>
</reference>
<reference key="2">
    <citation type="submission" date="2005-09" db="EMBL/GenBank/DDBJ databases">
        <authorList>
            <person name="Glass J.I."/>
            <person name="Lartigue C."/>
            <person name="Pfannkoch C."/>
            <person name="Baden-Tillson H."/>
            <person name="Smith H.O."/>
            <person name="Venter J.C."/>
            <person name="Roske K."/>
            <person name="Wise K.S."/>
            <person name="Calcutt M.J."/>
            <person name="Nelson W.C."/>
            <person name="Nierman W.C."/>
        </authorList>
    </citation>
    <scope>NUCLEOTIDE SEQUENCE [LARGE SCALE GENOMIC DNA]</scope>
    <source>
        <strain>California kid / ATCC 27343 / NCTC 10154</strain>
    </source>
</reference>
<reference key="3">
    <citation type="journal article" date="1992" name="Gene">
        <title>Structure of the dnaA and DnaA-box region in the Mycoplasma capricolum chromosome: conservation and variations in the course of evolution.</title>
        <authorList>
            <person name="Fujita M.Q."/>
            <person name="Yoshikawa H."/>
            <person name="Ogasawara N."/>
        </authorList>
    </citation>
    <scope>NUCLEOTIDE SEQUENCE [GENOMIC DNA] OF 1-25</scope>
</reference>
<reference key="4">
    <citation type="journal article" date="1997" name="FEMS Microbiol. Lett.">
        <title>Characterization of dnaA gene expression in Mycoplasma capricolum.</title>
        <authorList>
            <person name="Seto S."/>
            <person name="Murata S."/>
            <person name="Miyata M."/>
        </authorList>
    </citation>
    <scope>NUCLEOTIDE SEQUENCE [GENOMIC DNA] OF 1-25</scope>
</reference>
<reference key="5">
    <citation type="journal article" date="1993" name="Nucleic Acids Res.">
        <title>Mapping of replication initiation site in Mycoplasma capricolum genome by two-dimensional gel-electrophoretic analysis.</title>
        <authorList>
            <person name="Miyata M."/>
            <person name="Sano K."/>
            <person name="Okada R."/>
            <person name="Fukumura T."/>
        </authorList>
    </citation>
    <scope>NUCLEOTIDE SEQUENCE [GENOMIC DNA] OF 26-44</scope>
</reference>
<dbReference type="EMBL" id="Z33333">
    <property type="protein sequence ID" value="CAA83839.2"/>
    <property type="molecule type" value="Genomic_DNA"/>
</dbReference>
<dbReference type="EMBL" id="CP000123">
    <property type="protein sequence ID" value="ABC01390.1"/>
    <property type="molecule type" value="Genomic_DNA"/>
</dbReference>
<dbReference type="EMBL" id="D90426">
    <property type="protein sequence ID" value="BAA14414.1"/>
    <property type="molecule type" value="Genomic_DNA"/>
</dbReference>
<dbReference type="EMBL" id="AB000401">
    <property type="protein sequence ID" value="BAA20469.1"/>
    <property type="molecule type" value="Genomic_DNA"/>
</dbReference>
<dbReference type="EMBL" id="D14982">
    <property type="protein sequence ID" value="BAA03618.1"/>
    <property type="molecule type" value="Genomic_DNA"/>
</dbReference>
<dbReference type="PIR" id="S77869">
    <property type="entry name" value="S77869"/>
</dbReference>
<dbReference type="RefSeq" id="WP_011387696.1">
    <property type="nucleotide sequence ID" value="NC_007633.1"/>
</dbReference>
<dbReference type="SMR" id="P33249"/>
<dbReference type="GeneID" id="23778177"/>
<dbReference type="KEGG" id="mcp:MCAP_0870"/>
<dbReference type="HOGENOM" id="CLU_129938_2_0_14"/>
<dbReference type="PhylomeDB" id="P33249"/>
<dbReference type="Proteomes" id="UP000001928">
    <property type="component" value="Chromosome"/>
</dbReference>
<dbReference type="GO" id="GO:1990904">
    <property type="term" value="C:ribonucleoprotein complex"/>
    <property type="evidence" value="ECO:0007669"/>
    <property type="project" value="UniProtKB-KW"/>
</dbReference>
<dbReference type="GO" id="GO:0005840">
    <property type="term" value="C:ribosome"/>
    <property type="evidence" value="ECO:0007669"/>
    <property type="project" value="UniProtKB-KW"/>
</dbReference>
<dbReference type="GO" id="GO:0003735">
    <property type="term" value="F:structural constituent of ribosome"/>
    <property type="evidence" value="ECO:0007669"/>
    <property type="project" value="InterPro"/>
</dbReference>
<dbReference type="GO" id="GO:0006412">
    <property type="term" value="P:translation"/>
    <property type="evidence" value="ECO:0007669"/>
    <property type="project" value="UniProtKB-UniRule"/>
</dbReference>
<dbReference type="FunFam" id="1.10.287.3980:FF:000001">
    <property type="entry name" value="Mitochondrial ribosomal protein L34"/>
    <property type="match status" value="1"/>
</dbReference>
<dbReference type="Gene3D" id="1.10.287.3980">
    <property type="match status" value="1"/>
</dbReference>
<dbReference type="HAMAP" id="MF_00391">
    <property type="entry name" value="Ribosomal_bL34"/>
    <property type="match status" value="1"/>
</dbReference>
<dbReference type="InterPro" id="IPR000271">
    <property type="entry name" value="Ribosomal_bL34"/>
</dbReference>
<dbReference type="InterPro" id="IPR020939">
    <property type="entry name" value="Ribosomal_bL34_CS"/>
</dbReference>
<dbReference type="NCBIfam" id="TIGR01030">
    <property type="entry name" value="rpmH_bact"/>
    <property type="match status" value="1"/>
</dbReference>
<dbReference type="PANTHER" id="PTHR14503:SF4">
    <property type="entry name" value="LARGE RIBOSOMAL SUBUNIT PROTEIN BL34M"/>
    <property type="match status" value="1"/>
</dbReference>
<dbReference type="PANTHER" id="PTHR14503">
    <property type="entry name" value="MITOCHONDRIAL RIBOSOMAL PROTEIN 34 FAMILY MEMBER"/>
    <property type="match status" value="1"/>
</dbReference>
<dbReference type="Pfam" id="PF00468">
    <property type="entry name" value="Ribosomal_L34"/>
    <property type="match status" value="1"/>
</dbReference>
<dbReference type="PROSITE" id="PS00784">
    <property type="entry name" value="RIBOSOMAL_L34"/>
    <property type="match status" value="1"/>
</dbReference>
<name>RL34_MYCCT</name>
<keyword id="KW-0687">Ribonucleoprotein</keyword>
<keyword id="KW-0689">Ribosomal protein</keyword>
<accession>P33249</accession>
<accession>Q2SR01</accession>
<accession>Q59513</accession>
<proteinExistence type="inferred from homology"/>
<organism>
    <name type="scientific">Mycoplasma capricolum subsp. capricolum (strain California kid / ATCC 27343 / NCTC 10154)</name>
    <dbReference type="NCBI Taxonomy" id="340047"/>
    <lineage>
        <taxon>Bacteria</taxon>
        <taxon>Bacillati</taxon>
        <taxon>Mycoplasmatota</taxon>
        <taxon>Mollicutes</taxon>
        <taxon>Mycoplasmataceae</taxon>
        <taxon>Mycoplasma</taxon>
    </lineage>
</organism>
<sequence length="44" mass="5141">MKRTWQPSKLKHARVHGFRARMATKNGRKVIKARRAKGRVRLSA</sequence>
<gene>
    <name type="primary">rpmH</name>
    <name type="ordered locus">MCAP_0870</name>
</gene>
<protein>
    <recommendedName>
        <fullName evidence="1">Large ribosomal subunit protein bL34</fullName>
    </recommendedName>
    <alternativeName>
        <fullName>50S ribosomal protein L34</fullName>
    </alternativeName>
</protein>